<accession>Q7TME2</accession>
<accession>B1AQC8</accession>
<accession>Q8CH61</accession>
<organism>
    <name type="scientific">Mus musculus</name>
    <name type="common">Mouse</name>
    <dbReference type="NCBI Taxonomy" id="10090"/>
    <lineage>
        <taxon>Eukaryota</taxon>
        <taxon>Metazoa</taxon>
        <taxon>Chordata</taxon>
        <taxon>Craniata</taxon>
        <taxon>Vertebrata</taxon>
        <taxon>Euteleostomi</taxon>
        <taxon>Mammalia</taxon>
        <taxon>Eutheria</taxon>
        <taxon>Euarchontoglires</taxon>
        <taxon>Glires</taxon>
        <taxon>Rodentia</taxon>
        <taxon>Myomorpha</taxon>
        <taxon>Muroidea</taxon>
        <taxon>Muridae</taxon>
        <taxon>Murinae</taxon>
        <taxon>Mus</taxon>
        <taxon>Mus</taxon>
    </lineage>
</organism>
<gene>
    <name type="primary">Spag5</name>
</gene>
<protein>
    <recommendedName>
        <fullName>Sperm-associated antigen 5</fullName>
    </recommendedName>
    <alternativeName>
        <fullName>Mastrin</fullName>
    </alternativeName>
    <alternativeName>
        <fullName>Mitotic spindle-associated protein p126</fullName>
        <shortName>MAP126</shortName>
    </alternativeName>
</protein>
<proteinExistence type="evidence at protein level"/>
<feature type="chain" id="PRO_0000072094" description="Sperm-associated antigen 5">
    <location>
        <begin position="1"/>
        <end position="1165"/>
    </location>
</feature>
<feature type="region of interest" description="Disordered" evidence="4">
    <location>
        <begin position="1"/>
        <end position="23"/>
    </location>
</feature>
<feature type="region of interest" description="Disordered" evidence="4">
    <location>
        <begin position="431"/>
        <end position="457"/>
    </location>
</feature>
<feature type="region of interest" description="Interaction with KNSTRN" evidence="1">
    <location>
        <begin position="453"/>
        <end position="821"/>
    </location>
</feature>
<feature type="region of interest" description="Disordered" evidence="4">
    <location>
        <begin position="875"/>
        <end position="907"/>
    </location>
</feature>
<feature type="coiled-coil region" evidence="3">
    <location>
        <begin position="509"/>
        <end position="856"/>
    </location>
</feature>
<feature type="coiled-coil region" evidence="3">
    <location>
        <begin position="937"/>
        <end position="1146"/>
    </location>
</feature>
<feature type="compositionally biased region" description="Polar residues" evidence="4">
    <location>
        <begin position="440"/>
        <end position="449"/>
    </location>
</feature>
<feature type="compositionally biased region" description="Polar residues" evidence="4">
    <location>
        <begin position="876"/>
        <end position="897"/>
    </location>
</feature>
<feature type="modified residue" description="Phosphoserine" evidence="7">
    <location>
        <position position="12"/>
    </location>
</feature>
<feature type="modified residue" description="Phosphoserine" evidence="7">
    <location>
        <position position="14"/>
    </location>
</feature>
<feature type="modified residue" description="Phosphoserine" evidence="2">
    <location>
        <position position="66"/>
    </location>
</feature>
<feature type="modified residue" description="Phosphoserine" evidence="2">
    <location>
        <position position="161"/>
    </location>
</feature>
<feature type="modified residue" description="Phosphoserine" evidence="2">
    <location>
        <position position="321"/>
    </location>
</feature>
<feature type="modified residue" description="Phosphoserine" evidence="2">
    <location>
        <position position="333"/>
    </location>
</feature>
<feature type="modified residue" description="Phosphoserine" evidence="2">
    <location>
        <position position="342"/>
    </location>
</feature>
<feature type="modified residue" description="Phosphoserine; by GSK3-beta" evidence="2">
    <location>
        <position position="946"/>
    </location>
</feature>
<feature type="sequence conflict" description="In Ref. 1; AAO15441." evidence="6" ref="1">
    <original>A</original>
    <variation>S</variation>
    <location>
        <position position="48"/>
    </location>
</feature>
<feature type="sequence conflict" description="In Ref. 1; AAO15441." evidence="6" ref="1">
    <original>P</original>
    <variation>S</variation>
    <location>
        <position position="98"/>
    </location>
</feature>
<feature type="sequence conflict" description="In Ref. 1; AAO15441." evidence="6" ref="1">
    <original>L</original>
    <variation>P</variation>
    <location>
        <position position="225"/>
    </location>
</feature>
<feature type="sequence conflict" description="In Ref. 1; AAO15441." evidence="6" ref="1">
    <original>D</original>
    <variation>N</variation>
    <location>
        <position position="244"/>
    </location>
</feature>
<feature type="sequence conflict" description="In Ref. 1; AAO15441." evidence="6" ref="1">
    <original>S</original>
    <variation>P</variation>
    <location>
        <position position="347"/>
    </location>
</feature>
<feature type="sequence conflict" description="In Ref. 1; AAO15441." evidence="6" ref="1">
    <original>S</original>
    <variation>G</variation>
    <location>
        <position position="441"/>
    </location>
</feature>
<feature type="sequence conflict" description="In Ref. 1; AAO15441." evidence="6" ref="1">
    <original>KEV</original>
    <variation>TGM</variation>
    <location>
        <begin position="663"/>
        <end position="665"/>
    </location>
</feature>
<feature type="sequence conflict" description="In Ref. 1; AAO15441." evidence="6" ref="1">
    <original>F</original>
    <variation>S</variation>
    <location>
        <position position="776"/>
    </location>
</feature>
<feature type="sequence conflict" description="In Ref. 1; AAO15441." evidence="6" ref="1">
    <original>SN</original>
    <variation>PS</variation>
    <location>
        <begin position="888"/>
        <end position="889"/>
    </location>
</feature>
<dbReference type="EMBL" id="AF420307">
    <property type="protein sequence ID" value="AAO15441.1"/>
    <property type="molecule type" value="mRNA"/>
</dbReference>
<dbReference type="EMBL" id="AY226907">
    <property type="protein sequence ID" value="AAP46103.1"/>
    <property type="molecule type" value="Genomic_DNA"/>
</dbReference>
<dbReference type="EMBL" id="AL591070">
    <property type="status" value="NOT_ANNOTATED_CDS"/>
    <property type="molecule type" value="Genomic_DNA"/>
</dbReference>
<dbReference type="EMBL" id="BC052672">
    <property type="protein sequence ID" value="AAH52672.1"/>
    <property type="molecule type" value="mRNA"/>
</dbReference>
<dbReference type="CCDS" id="CCDS25098.1"/>
<dbReference type="RefSeq" id="NP_059103.1">
    <property type="nucleotide sequence ID" value="NM_017407.3"/>
</dbReference>
<dbReference type="SMR" id="Q7TME2"/>
<dbReference type="BioGRID" id="207577">
    <property type="interactions" value="27"/>
</dbReference>
<dbReference type="FunCoup" id="Q7TME2">
    <property type="interactions" value="442"/>
</dbReference>
<dbReference type="IntAct" id="Q7TME2">
    <property type="interactions" value="11"/>
</dbReference>
<dbReference type="STRING" id="10090.ENSMUSP00000045286"/>
<dbReference type="GlyGen" id="Q7TME2">
    <property type="glycosylation" value="5 sites, 1 N-linked glycan (1 site), 1 O-linked glycan (2 sites)"/>
</dbReference>
<dbReference type="iPTMnet" id="Q7TME2"/>
<dbReference type="PhosphoSitePlus" id="Q7TME2"/>
<dbReference type="PaxDb" id="10090-ENSMUSP00000045286"/>
<dbReference type="PeptideAtlas" id="Q7TME2"/>
<dbReference type="ProteomicsDB" id="261559"/>
<dbReference type="Pumba" id="Q7TME2"/>
<dbReference type="DNASU" id="54141"/>
<dbReference type="Ensembl" id="ENSMUST00000045026.4">
    <property type="protein sequence ID" value="ENSMUSP00000045286.4"/>
    <property type="gene ID" value="ENSMUSG00000002055.10"/>
</dbReference>
<dbReference type="GeneID" id="54141"/>
<dbReference type="KEGG" id="mmu:54141"/>
<dbReference type="UCSC" id="uc007kiv.2">
    <property type="organism name" value="mouse"/>
</dbReference>
<dbReference type="AGR" id="MGI:1927470"/>
<dbReference type="CTD" id="10615"/>
<dbReference type="MGI" id="MGI:1927470">
    <property type="gene designation" value="Spag5"/>
</dbReference>
<dbReference type="VEuPathDB" id="HostDB:ENSMUSG00000002055"/>
<dbReference type="eggNOG" id="ENOG502RW0Y">
    <property type="taxonomic scope" value="Eukaryota"/>
</dbReference>
<dbReference type="GeneTree" id="ENSGT00400000022377"/>
<dbReference type="HOGENOM" id="CLU_007803_0_0_1"/>
<dbReference type="InParanoid" id="Q7TME2"/>
<dbReference type="OMA" id="MEEREMS"/>
<dbReference type="OrthoDB" id="5972338at2759"/>
<dbReference type="PhylomeDB" id="Q7TME2"/>
<dbReference type="TreeFam" id="TF336280"/>
<dbReference type="BioGRID-ORCS" id="54141">
    <property type="hits" value="11 hits in 79 CRISPR screens"/>
</dbReference>
<dbReference type="CD-CODE" id="01CA17F3">
    <property type="entry name" value="Centrosome"/>
</dbReference>
<dbReference type="ChiTaRS" id="Spag5">
    <property type="organism name" value="mouse"/>
</dbReference>
<dbReference type="PRO" id="PR:Q7TME2"/>
<dbReference type="Proteomes" id="UP000000589">
    <property type="component" value="Chromosome 11"/>
</dbReference>
<dbReference type="RNAct" id="Q7TME2">
    <property type="molecule type" value="protein"/>
</dbReference>
<dbReference type="Bgee" id="ENSMUSG00000002055">
    <property type="expression patterns" value="Expressed in epithelium of lens and 206 other cell types or tissues"/>
</dbReference>
<dbReference type="GO" id="GO:0034451">
    <property type="term" value="C:centriolar satellite"/>
    <property type="evidence" value="ECO:0007669"/>
    <property type="project" value="UniProtKB-SubCell"/>
</dbReference>
<dbReference type="GO" id="GO:0036064">
    <property type="term" value="C:ciliary basal body"/>
    <property type="evidence" value="ECO:0000314"/>
    <property type="project" value="MGI"/>
</dbReference>
<dbReference type="GO" id="GO:0035253">
    <property type="term" value="C:ciliary rootlet"/>
    <property type="evidence" value="ECO:0000314"/>
    <property type="project" value="MGI"/>
</dbReference>
<dbReference type="GO" id="GO:0005737">
    <property type="term" value="C:cytoplasm"/>
    <property type="evidence" value="ECO:0000250"/>
    <property type="project" value="UniProtKB"/>
</dbReference>
<dbReference type="GO" id="GO:0005829">
    <property type="term" value="C:cytosol"/>
    <property type="evidence" value="ECO:0007669"/>
    <property type="project" value="Ensembl"/>
</dbReference>
<dbReference type="GO" id="GO:0000776">
    <property type="term" value="C:kinetochore"/>
    <property type="evidence" value="ECO:0000250"/>
    <property type="project" value="UniProtKB"/>
</dbReference>
<dbReference type="GO" id="GO:0035371">
    <property type="term" value="C:microtubule plus-end"/>
    <property type="evidence" value="ECO:0000250"/>
    <property type="project" value="UniProtKB"/>
</dbReference>
<dbReference type="GO" id="GO:0030496">
    <property type="term" value="C:midbody"/>
    <property type="evidence" value="ECO:0007669"/>
    <property type="project" value="UniProtKB-SubCell"/>
</dbReference>
<dbReference type="GO" id="GO:0072686">
    <property type="term" value="C:mitotic spindle"/>
    <property type="evidence" value="ECO:0000314"/>
    <property type="project" value="MGI"/>
</dbReference>
<dbReference type="GO" id="GO:0097431">
    <property type="term" value="C:mitotic spindle pole"/>
    <property type="evidence" value="ECO:0000250"/>
    <property type="project" value="UniProtKB"/>
</dbReference>
<dbReference type="GO" id="GO:0016604">
    <property type="term" value="C:nuclear body"/>
    <property type="evidence" value="ECO:0007669"/>
    <property type="project" value="Ensembl"/>
</dbReference>
<dbReference type="GO" id="GO:0005819">
    <property type="term" value="C:spindle"/>
    <property type="evidence" value="ECO:0000266"/>
    <property type="project" value="MGI"/>
</dbReference>
<dbReference type="GO" id="GO:0008017">
    <property type="term" value="F:microtubule binding"/>
    <property type="evidence" value="ECO:0000250"/>
    <property type="project" value="UniProtKB"/>
</dbReference>
<dbReference type="GO" id="GO:0051301">
    <property type="term" value="P:cell division"/>
    <property type="evidence" value="ECO:0007669"/>
    <property type="project" value="UniProtKB-KW"/>
</dbReference>
<dbReference type="GO" id="GO:0007059">
    <property type="term" value="P:chromosome segregation"/>
    <property type="evidence" value="ECO:0000250"/>
    <property type="project" value="UniProtKB"/>
</dbReference>
<dbReference type="GO" id="GO:0051294">
    <property type="term" value="P:establishment of spindle orientation"/>
    <property type="evidence" value="ECO:0000315"/>
    <property type="project" value="MGI"/>
</dbReference>
<dbReference type="GO" id="GO:0000070">
    <property type="term" value="P:mitotic sister chromatid segregation"/>
    <property type="evidence" value="ECO:0000250"/>
    <property type="project" value="UniProtKB"/>
</dbReference>
<dbReference type="GO" id="GO:0032388">
    <property type="term" value="P:positive regulation of intracellular transport"/>
    <property type="evidence" value="ECO:0000250"/>
    <property type="project" value="UniProtKB"/>
</dbReference>
<dbReference type="GO" id="GO:1905832">
    <property type="term" value="P:positive regulation of spindle assembly"/>
    <property type="evidence" value="ECO:0000250"/>
    <property type="project" value="UniProtKB"/>
</dbReference>
<dbReference type="GO" id="GO:0071539">
    <property type="term" value="P:protein localization to centrosome"/>
    <property type="evidence" value="ECO:0007669"/>
    <property type="project" value="Ensembl"/>
</dbReference>
<dbReference type="GO" id="GO:0051988">
    <property type="term" value="P:regulation of attachment of spindle microtubules to kinetochore"/>
    <property type="evidence" value="ECO:0000250"/>
    <property type="project" value="UniProtKB"/>
</dbReference>
<dbReference type="GO" id="GO:0090235">
    <property type="term" value="P:regulation of metaphase plate congression"/>
    <property type="evidence" value="ECO:0000250"/>
    <property type="project" value="UniProtKB"/>
</dbReference>
<dbReference type="GO" id="GO:0007051">
    <property type="term" value="P:spindle organization"/>
    <property type="evidence" value="ECO:0000250"/>
    <property type="project" value="UniProtKB"/>
</dbReference>
<dbReference type="InterPro" id="IPR028728">
    <property type="entry name" value="Astrin"/>
</dbReference>
<dbReference type="PANTHER" id="PTHR15347">
    <property type="entry name" value="SPERM-ASSOCIATED ANTIGEN 5"/>
    <property type="match status" value="1"/>
</dbReference>
<dbReference type="PANTHER" id="PTHR15347:SF1">
    <property type="entry name" value="SPERM-ASSOCIATED ANTIGEN 5"/>
    <property type="match status" value="1"/>
</dbReference>
<comment type="function">
    <text evidence="2">Essential component of the mitotic spindle required for normal chromosome segregation and progression into anaphase. Required for chromosome alignment, normal timing of sister chromatid segregation, and maintenance of spindle pole architecture. In complex with SKAP, promotes stable microtubule-kinetochore attachments. May contribute to the regulation of separase activity. May regulate AURKA localization to mitotic spindle, but not to centrosomes and CCNB1 localization to both mitotic spindle and centrosomes. Involved in centriole duplication. Required for CDK5RAP22, CEP152, WDR62 and CEP63 centrosomal localization and promotes the centrosomal localization of CDK2. In non-mitotic cells, upon stress induction, inhibits mammalian target of rapamycin complex 1 (mTORC1) association and recruits the mTORC1 component RPTOR to stress granules (SGs), thereby preventing mTORC1 hyperactivation-induced apoptosis. May enhance GSK3B-mediated phosphorylation of other substrates, such as MAPT/TAU (By similarity).</text>
</comment>
<comment type="subunit">
    <text evidence="2">Homodimer, with a globular head domain and a long stalk. Homooligomer; the globular head domains associate, resulting in aster-like structures. Binds to microtubules in the mitotic spindle. Interacts with DCLRE1B/Apollo. Part of an astrin (SPAG5)-kinastrin (SKAP) complex containing KNSTRN, SPAG5, PLK1, DYNLL1 and SGO2A. Interacts with KNSTRN. Interacts with RPTOR; this interaction competes with RPTOR binding to MTOR, resulting in decreased mTORC1 formation. Interacts with G3BP1. The complex formed with G3BP1 and RPTOR is increased by oxidative stress. Interacts with OSBPL8, PCM1 and CDK5RAP2. Interacts (via C-terminus) with NUMA1 (via C-terminus); this interaction promotes the recruitment of SPAG5 to the microtubules at spindle poles in a dynein-dynactin-dependent manner. Interacts with DYNLL1 (By similarity).</text>
</comment>
<comment type="subcellular location">
    <subcellularLocation>
        <location evidence="2">Cytoplasm</location>
    </subcellularLocation>
    <subcellularLocation>
        <location evidence="2">Cytoplasm</location>
        <location evidence="2">Cytoskeleton</location>
        <location evidence="2">Spindle</location>
    </subcellularLocation>
    <subcellularLocation>
        <location evidence="2">Cytoplasm</location>
        <location evidence="2">Cytoskeleton</location>
        <location evidence="2">Spindle pole</location>
    </subcellularLocation>
    <subcellularLocation>
        <location evidence="2">Chromosome</location>
        <location evidence="2">Centromere</location>
        <location evidence="2">Kinetochore</location>
    </subcellularLocation>
    <subcellularLocation>
        <location evidence="2">Midbody</location>
    </subcellularLocation>
    <subcellularLocation>
        <location evidence="2">Cytoplasm</location>
        <location evidence="2">Cytoskeleton</location>
        <location evidence="2">Microtubule organizing center</location>
        <location evidence="2">Centrosome</location>
    </subcellularLocation>
    <subcellularLocation>
        <location evidence="2">Cytoplasm</location>
        <location evidence="2">Cytoskeleton</location>
        <location evidence="2">Microtubule organizing center</location>
        <location evidence="2">Centrosome</location>
        <location evidence="2">Centriolar satellite</location>
    </subcellularLocation>
    <text evidence="2">Colocalizes with PCM1 at centriolar satellites throughout the cell cycle (By similarity). In a punctate pattern in interphase cells. During mitosis, detected at spindle poles during prophase, throughout the spindle in metaphase and anaphase, and at midzone microtubules in anaphase and telophase. Efficient targeting to the mitotic spindle may depend upon phosphorylation by GSK3B. Detected on kinetochores of chromosomes that have congressed. The astrin (SPAG5)-kinastrin (SKAP) complex localizes to the microtubule plus ends (By similarity). In non-mitotic non-stressed cells, shows a microtubuli pattern. During oxidative stress, accumulates in stress granules (By similarity).</text>
</comment>
<comment type="tissue specificity">
    <text evidence="5">Detected in testis, but not in the other tissues tested.</text>
</comment>
<comment type="induction">
    <text evidence="1">Expression is cell cycle-regulated, with an increase from prophase to cytokinesis and return to basal levels at the next G1 phase.</text>
</comment>
<comment type="PTM">
    <text evidence="1">Phosphorylated by AURKA.</text>
</comment>
<name>SPAG5_MOUSE</name>
<evidence type="ECO:0000250" key="1"/>
<evidence type="ECO:0000250" key="2">
    <source>
        <dbReference type="UniProtKB" id="Q96R06"/>
    </source>
</evidence>
<evidence type="ECO:0000255" key="3"/>
<evidence type="ECO:0000256" key="4">
    <source>
        <dbReference type="SAM" id="MobiDB-lite"/>
    </source>
</evidence>
<evidence type="ECO:0000269" key="5">
    <source>
    </source>
</evidence>
<evidence type="ECO:0000305" key="6"/>
<evidence type="ECO:0007744" key="7">
    <source>
    </source>
</evidence>
<sequence length="1165" mass="129993">MWRVKTLNLGLSPSPQKGKPAMSTPLRELKLQPEALADSGKGPSMISALTPYLCRLELKERCNNSSPVDFINTENNFLSEQFSHPSTHIEACQRESDPTPESNSLFHTLEEAIETVDDFVVDPRDDSIVESMVLLPFSLGQQQDLMLQAHLDTTAERTKSSLNESLGLEDLVGKEVAPCVEDSLTEIVAIRPEQPTFQDPPLGPSDTEDAPVDLVPSENVLNFSLARLSPSAVLAQDFSVDHVDPGEETVENRVLQEMETSFPTFPEEAELGDQAPAANAEAVSPLYLTSSLVEMGPREAPGPTVEDASRIPGLESETWMSPLAWLEKGVNTSVMLQNLRQSLSFSSVLQDAAVGNTPLATCSVGTSFTPPAPLEVGTKDSTSETERLLLGCRPPDLATLSRHDLEENLLNSLVLLEVLSHQLQAWKSQLTVPHREARDSSTQTDSSPCGVTKTPKHLQDSKEIRQALLQARNVMQSWGLVSGDLLSLLHLSLTHVQEGRVTVSQESQRSKTLVSSCSRVLKKLKAKLQSLKTECEEARHSKEMALKGKAAAEAVLEAFRAHASQRISQLEQGLTSMQEFRGLLQEAQTQLIGLHTEQKELAQQTVSLSSALQQDWTSVQLNYGIWAALLSWSRELTKKLTAKSRQALQERDAAIEEKKQVVKEVEQVSAHLEDCKGQIEQLKLENSRLTADLSAQLQILTSTESQLKEVRSQHSRCVQDLAVKDELLCQLTQSNKEQATQWQKEEMELKHIQAELLQQQAVLAKEVQDLRETVEFIDEESQVAHRELGQIESQLKVTLELLRERSLQCETLRDTVDSLRAELASTEAKHEKQALEKTHQHSQELRLLAEQLQSLTLFLQAKLKENKAESEIILPSTGSAPAQEHPLSNDSSISEQTPTAAVDEVPEPAPVPLLGSVKSAFTRVASMASFQPTETPDLEKSLAEMSTVLQELKSLCSLLQESKEEATGVLQREICELHSRLQAQEEEHQEALKAKEADMEKLNQALCLLRKNEKELLEVIQKQNEKILGQIDKSGQLINLREEVTQLTQSLRRAETETKVLQEALEGQLDPSCQLMATNWIQEKVFLSQEVSKLRVMFLEMKTEKEQLMDKYLSHRHILEENLRRSDTELKKLDDTIQHVYETLLSIPETMKSCKELQGLLEFLS</sequence>
<reference key="1">
    <citation type="journal article" date="2003" name="Biochem. Biophys. Res. Commun.">
        <title>Expression and promoter analysis of mouse mastrin gene.</title>
        <authorList>
            <person name="Chang M.-S."/>
            <person name="Chen C.-Y."/>
            <person name="Huang C.-J."/>
            <person name="Fan C.-C."/>
            <person name="Chu J.-M."/>
            <person name="Yang Y.-C."/>
        </authorList>
    </citation>
    <scope>NUCLEOTIDE SEQUENCE [MRNA]</scope>
    <scope>TISSUE SPECIFICITY</scope>
    <source>
        <strain>129/SvJ</strain>
        <strain>NIH Swiss</strain>
        <tissue>Testis</tissue>
    </source>
</reference>
<reference key="2">
    <citation type="journal article" date="2009" name="PLoS Biol.">
        <title>Lineage-specific biology revealed by a finished genome assembly of the mouse.</title>
        <authorList>
            <person name="Church D.M."/>
            <person name="Goodstadt L."/>
            <person name="Hillier L.W."/>
            <person name="Zody M.C."/>
            <person name="Goldstein S."/>
            <person name="She X."/>
            <person name="Bult C.J."/>
            <person name="Agarwala R."/>
            <person name="Cherry J.L."/>
            <person name="DiCuccio M."/>
            <person name="Hlavina W."/>
            <person name="Kapustin Y."/>
            <person name="Meric P."/>
            <person name="Maglott D."/>
            <person name="Birtle Z."/>
            <person name="Marques A.C."/>
            <person name="Graves T."/>
            <person name="Zhou S."/>
            <person name="Teague B."/>
            <person name="Potamousis K."/>
            <person name="Churas C."/>
            <person name="Place M."/>
            <person name="Herschleb J."/>
            <person name="Runnheim R."/>
            <person name="Forrest D."/>
            <person name="Amos-Landgraf J."/>
            <person name="Schwartz D.C."/>
            <person name="Cheng Z."/>
            <person name="Lindblad-Toh K."/>
            <person name="Eichler E.E."/>
            <person name="Ponting C.P."/>
        </authorList>
    </citation>
    <scope>NUCLEOTIDE SEQUENCE [LARGE SCALE GENOMIC DNA]</scope>
    <source>
        <strain>C57BL/6J</strain>
    </source>
</reference>
<reference key="3">
    <citation type="journal article" date="2004" name="Genome Res.">
        <title>The status, quality, and expansion of the NIH full-length cDNA project: the Mammalian Gene Collection (MGC).</title>
        <authorList>
            <consortium name="The MGC Project Team"/>
        </authorList>
    </citation>
    <scope>NUCLEOTIDE SEQUENCE [LARGE SCALE MRNA]</scope>
    <source>
        <strain>C3H/He</strain>
        <tissue>Osteoblast</tissue>
    </source>
</reference>
<reference key="4">
    <citation type="journal article" date="2010" name="Cell">
        <title>A tissue-specific atlas of mouse protein phosphorylation and expression.</title>
        <authorList>
            <person name="Huttlin E.L."/>
            <person name="Jedrychowski M.P."/>
            <person name="Elias J.E."/>
            <person name="Goswami T."/>
            <person name="Rad R."/>
            <person name="Beausoleil S.A."/>
            <person name="Villen J."/>
            <person name="Haas W."/>
            <person name="Sowa M.E."/>
            <person name="Gygi S.P."/>
        </authorList>
    </citation>
    <scope>PHOSPHORYLATION [LARGE SCALE ANALYSIS] AT SER-12 AND SER-14</scope>
    <scope>IDENTIFICATION BY MASS SPECTROMETRY [LARGE SCALE ANALYSIS]</scope>
    <source>
        <tissue>Spleen</tissue>
        <tissue>Testis</tissue>
    </source>
</reference>
<keyword id="KW-0131">Cell cycle</keyword>
<keyword id="KW-0132">Cell division</keyword>
<keyword id="KW-0137">Centromere</keyword>
<keyword id="KW-0158">Chromosome</keyword>
<keyword id="KW-0175">Coiled coil</keyword>
<keyword id="KW-0963">Cytoplasm</keyword>
<keyword id="KW-0206">Cytoskeleton</keyword>
<keyword id="KW-0995">Kinetochore</keyword>
<keyword id="KW-0493">Microtubule</keyword>
<keyword id="KW-0498">Mitosis</keyword>
<keyword id="KW-0597">Phosphoprotein</keyword>
<keyword id="KW-1185">Reference proteome</keyword>